<organism>
    <name type="scientific">Bacillus subtilis (strain 168)</name>
    <dbReference type="NCBI Taxonomy" id="224308"/>
    <lineage>
        <taxon>Bacteria</taxon>
        <taxon>Bacillati</taxon>
        <taxon>Bacillota</taxon>
        <taxon>Bacilli</taxon>
        <taxon>Bacillales</taxon>
        <taxon>Bacillaceae</taxon>
        <taxon>Bacillus</taxon>
    </lineage>
</organism>
<evidence type="ECO:0000269" key="1">
    <source>
    </source>
</evidence>
<evidence type="ECO:0000305" key="2"/>
<dbReference type="EC" id="4.2.3.130" evidence="1"/>
<dbReference type="EMBL" id="AF008220">
    <property type="protein sequence ID" value="AAC00246.1"/>
    <property type="molecule type" value="Genomic_DNA"/>
</dbReference>
<dbReference type="EMBL" id="AL009126">
    <property type="protein sequence ID" value="CAB15028.1"/>
    <property type="molecule type" value="Genomic_DNA"/>
</dbReference>
<dbReference type="PIR" id="E69998">
    <property type="entry name" value="E69998"/>
</dbReference>
<dbReference type="RefSeq" id="WP_004399076.1">
    <property type="nucleotide sequence ID" value="NZ_OZ025638.1"/>
</dbReference>
<dbReference type="SMR" id="O34707"/>
<dbReference type="FunCoup" id="O34707">
    <property type="interactions" value="12"/>
</dbReference>
<dbReference type="STRING" id="224308.BSU30500"/>
<dbReference type="PaxDb" id="224308-BSU30500"/>
<dbReference type="EnsemblBacteria" id="CAB15028">
    <property type="protein sequence ID" value="CAB15028"/>
    <property type="gene ID" value="BSU_30500"/>
</dbReference>
<dbReference type="GeneID" id="936222"/>
<dbReference type="KEGG" id="bsu:BSU30500"/>
<dbReference type="PATRIC" id="fig|224308.179.peg.3308"/>
<dbReference type="eggNOG" id="ENOG502Z812">
    <property type="taxonomic scope" value="Bacteria"/>
</dbReference>
<dbReference type="InParanoid" id="O34707"/>
<dbReference type="OrthoDB" id="2371262at2"/>
<dbReference type="BioCyc" id="BSUB:BSU30500-MONOMER"/>
<dbReference type="BRENDA" id="4.2.3.130">
    <property type="organism ID" value="656"/>
</dbReference>
<dbReference type="Proteomes" id="UP000001570">
    <property type="component" value="Chromosome"/>
</dbReference>
<dbReference type="GO" id="GO:0016829">
    <property type="term" value="F:lyase activity"/>
    <property type="evidence" value="ECO:0007669"/>
    <property type="project" value="UniProtKB-KW"/>
</dbReference>
<dbReference type="InterPro" id="IPR019712">
    <property type="entry name" value="YtpB-like"/>
</dbReference>
<dbReference type="Pfam" id="PF10776">
    <property type="entry name" value="DUF2600"/>
    <property type="match status" value="1"/>
</dbReference>
<sequence length="367" mass="42843">MTVPEHPFGLMAKVYRDIFPLVHQELDIWKQKSESIHNSELKAQATASIRDKTFHCEGGGILALLSGSQKQKCVEFIIAYQTISDYLDNLCDRSTSLDPQDFRMLHASMQDALTVGAELQNYYQFREEQDDSGYLHELVKTCQRVLGSIEHYDMIKPYLLELCGYYCDLQVHKHVIEHERVPRLEKWFTQYESELPEMEWYEFSACAGSTLGIFCLVAYSFQPDFTESTAKKIRDSYFPYIQGLHILLDYLIDQEEDLLEGDLNFCSYYQSHEEMMDRLEHFIHKADEHLQGIPHENFHRLINRGLLGVYLSDDKVAGQKEMGRLAKKLIKASGKTSLFFYINGRAYRKFQKMSWMKNSKKKAQIIC</sequence>
<gene>
    <name type="primary">ytpB</name>
    <name type="ordered locus">BSU30500</name>
</gene>
<name>YTPB_BACSU</name>
<protein>
    <recommendedName>
        <fullName>Tetraprenyl-beta-curcumene synthase</fullName>
        <ecNumber evidence="1">4.2.3.130</ecNumber>
    </recommendedName>
</protein>
<feature type="chain" id="PRO_0000049901" description="Tetraprenyl-beta-curcumene synthase">
    <location>
        <begin position="1"/>
        <end position="367"/>
    </location>
</feature>
<keyword id="KW-0456">Lyase</keyword>
<keyword id="KW-1185">Reference proteome</keyword>
<proteinExistence type="evidence at protein level"/>
<comment type="function">
    <text evidence="1">Catalyzes the transformation of a linear C35 prenyl diphosphate chain to form tetraprenyl-beta-curcumene.</text>
</comment>
<comment type="catalytic activity">
    <reaction evidence="1">
        <text>all-trans-heptaprenyl diphosphate = (R)-tetraprenyl-beta-curcumene + diphosphate</text>
        <dbReference type="Rhea" id="RHEA:33123"/>
        <dbReference type="ChEBI" id="CHEBI:33019"/>
        <dbReference type="ChEBI" id="CHEBI:58206"/>
        <dbReference type="ChEBI" id="CHEBI:64801"/>
        <dbReference type="EC" id="4.2.3.130"/>
    </reaction>
</comment>
<comment type="similarity">
    <text evidence="2">Belongs to the large terpene synthase family.</text>
</comment>
<reference key="1">
    <citation type="journal article" date="1997" name="Microbiology">
        <title>Sequencing and functional annotation of the Bacillus subtilis genes in the 200 kb rrnB-dnaB region.</title>
        <authorList>
            <person name="Lapidus A."/>
            <person name="Galleron N."/>
            <person name="Sorokin A."/>
            <person name="Ehrlich S.D."/>
        </authorList>
    </citation>
    <scope>NUCLEOTIDE SEQUENCE [GENOMIC DNA]</scope>
    <source>
        <strain>168</strain>
    </source>
</reference>
<reference key="2">
    <citation type="journal article" date="1997" name="Nature">
        <title>The complete genome sequence of the Gram-positive bacterium Bacillus subtilis.</title>
        <authorList>
            <person name="Kunst F."/>
            <person name="Ogasawara N."/>
            <person name="Moszer I."/>
            <person name="Albertini A.M."/>
            <person name="Alloni G."/>
            <person name="Azevedo V."/>
            <person name="Bertero M.G."/>
            <person name="Bessieres P."/>
            <person name="Bolotin A."/>
            <person name="Borchert S."/>
            <person name="Borriss R."/>
            <person name="Boursier L."/>
            <person name="Brans A."/>
            <person name="Braun M."/>
            <person name="Brignell S.C."/>
            <person name="Bron S."/>
            <person name="Brouillet S."/>
            <person name="Bruschi C.V."/>
            <person name="Caldwell B."/>
            <person name="Capuano V."/>
            <person name="Carter N.M."/>
            <person name="Choi S.-K."/>
            <person name="Codani J.-J."/>
            <person name="Connerton I.F."/>
            <person name="Cummings N.J."/>
            <person name="Daniel R.A."/>
            <person name="Denizot F."/>
            <person name="Devine K.M."/>
            <person name="Duesterhoeft A."/>
            <person name="Ehrlich S.D."/>
            <person name="Emmerson P.T."/>
            <person name="Entian K.-D."/>
            <person name="Errington J."/>
            <person name="Fabret C."/>
            <person name="Ferrari E."/>
            <person name="Foulger D."/>
            <person name="Fritz C."/>
            <person name="Fujita M."/>
            <person name="Fujita Y."/>
            <person name="Fuma S."/>
            <person name="Galizzi A."/>
            <person name="Galleron N."/>
            <person name="Ghim S.-Y."/>
            <person name="Glaser P."/>
            <person name="Goffeau A."/>
            <person name="Golightly E.J."/>
            <person name="Grandi G."/>
            <person name="Guiseppi G."/>
            <person name="Guy B.J."/>
            <person name="Haga K."/>
            <person name="Haiech J."/>
            <person name="Harwood C.R."/>
            <person name="Henaut A."/>
            <person name="Hilbert H."/>
            <person name="Holsappel S."/>
            <person name="Hosono S."/>
            <person name="Hullo M.-F."/>
            <person name="Itaya M."/>
            <person name="Jones L.-M."/>
            <person name="Joris B."/>
            <person name="Karamata D."/>
            <person name="Kasahara Y."/>
            <person name="Klaerr-Blanchard M."/>
            <person name="Klein C."/>
            <person name="Kobayashi Y."/>
            <person name="Koetter P."/>
            <person name="Koningstein G."/>
            <person name="Krogh S."/>
            <person name="Kumano M."/>
            <person name="Kurita K."/>
            <person name="Lapidus A."/>
            <person name="Lardinois S."/>
            <person name="Lauber J."/>
            <person name="Lazarevic V."/>
            <person name="Lee S.-M."/>
            <person name="Levine A."/>
            <person name="Liu H."/>
            <person name="Masuda S."/>
            <person name="Mauel C."/>
            <person name="Medigue C."/>
            <person name="Medina N."/>
            <person name="Mellado R.P."/>
            <person name="Mizuno M."/>
            <person name="Moestl D."/>
            <person name="Nakai S."/>
            <person name="Noback M."/>
            <person name="Noone D."/>
            <person name="O'Reilly M."/>
            <person name="Ogawa K."/>
            <person name="Ogiwara A."/>
            <person name="Oudega B."/>
            <person name="Park S.-H."/>
            <person name="Parro V."/>
            <person name="Pohl T.M."/>
            <person name="Portetelle D."/>
            <person name="Porwollik S."/>
            <person name="Prescott A.M."/>
            <person name="Presecan E."/>
            <person name="Pujic P."/>
            <person name="Purnelle B."/>
            <person name="Rapoport G."/>
            <person name="Rey M."/>
            <person name="Reynolds S."/>
            <person name="Rieger M."/>
            <person name="Rivolta C."/>
            <person name="Rocha E."/>
            <person name="Roche B."/>
            <person name="Rose M."/>
            <person name="Sadaie Y."/>
            <person name="Sato T."/>
            <person name="Scanlan E."/>
            <person name="Schleich S."/>
            <person name="Schroeter R."/>
            <person name="Scoffone F."/>
            <person name="Sekiguchi J."/>
            <person name="Sekowska A."/>
            <person name="Seror S.J."/>
            <person name="Serror P."/>
            <person name="Shin B.-S."/>
            <person name="Soldo B."/>
            <person name="Sorokin A."/>
            <person name="Tacconi E."/>
            <person name="Takagi T."/>
            <person name="Takahashi H."/>
            <person name="Takemaru K."/>
            <person name="Takeuchi M."/>
            <person name="Tamakoshi A."/>
            <person name="Tanaka T."/>
            <person name="Terpstra P."/>
            <person name="Tognoni A."/>
            <person name="Tosato V."/>
            <person name="Uchiyama S."/>
            <person name="Vandenbol M."/>
            <person name="Vannier F."/>
            <person name="Vassarotti A."/>
            <person name="Viari A."/>
            <person name="Wambutt R."/>
            <person name="Wedler E."/>
            <person name="Wedler H."/>
            <person name="Weitzenegger T."/>
            <person name="Winters P."/>
            <person name="Wipat A."/>
            <person name="Yamamoto H."/>
            <person name="Yamane K."/>
            <person name="Yasumoto K."/>
            <person name="Yata K."/>
            <person name="Yoshida K."/>
            <person name="Yoshikawa H.-F."/>
            <person name="Zumstein E."/>
            <person name="Yoshikawa H."/>
            <person name="Danchin A."/>
        </authorList>
    </citation>
    <scope>NUCLEOTIDE SEQUENCE [LARGE SCALE GENOMIC DNA]</scope>
    <source>
        <strain>168</strain>
    </source>
</reference>
<reference key="3">
    <citation type="journal article" date="2011" name="J. Am. Chem. Soc.">
        <title>Sesquarterpenes (C35 terpenes) biosynthesized via the cyclization of a linear C35 isoprenoid by a tetraprenyl-beta-curcumene synthase and a tetraprenyl-beta-curcumene cyclase: identification of a new terpene cyclase.</title>
        <authorList>
            <person name="Sato T."/>
            <person name="Yoshida S."/>
            <person name="Hoshino H."/>
            <person name="Tanno M."/>
            <person name="Nakajima M."/>
            <person name="Hoshino T."/>
        </authorList>
    </citation>
    <scope>FUNCTION</scope>
    <scope>CATALYTIC ACTIVITY</scope>
</reference>
<accession>O34707</accession>